<keyword id="KW-0408">Iron</keyword>
<keyword id="KW-0411">Iron-sulfur</keyword>
<keyword id="KW-0479">Metal-binding</keyword>
<feature type="chain" id="PRO_0000311456" description="Putative iron-sulfur cluster insertion protein ErpA">
    <location>
        <begin position="1"/>
        <end position="123"/>
    </location>
</feature>
<feature type="binding site" evidence="1">
    <location>
        <position position="51"/>
    </location>
    <ligand>
        <name>iron-sulfur cluster</name>
        <dbReference type="ChEBI" id="CHEBI:30408"/>
    </ligand>
</feature>
<feature type="binding site" evidence="1">
    <location>
        <position position="115"/>
    </location>
    <ligand>
        <name>iron-sulfur cluster</name>
        <dbReference type="ChEBI" id="CHEBI:30408"/>
    </ligand>
</feature>
<feature type="binding site" evidence="1">
    <location>
        <position position="117"/>
    </location>
    <ligand>
        <name>iron-sulfur cluster</name>
        <dbReference type="ChEBI" id="CHEBI:30408"/>
    </ligand>
</feature>
<gene>
    <name evidence="1" type="primary">erpA</name>
    <name type="ordered locus">Bamb_0575</name>
</gene>
<dbReference type="EMBL" id="CP000440">
    <property type="protein sequence ID" value="ABI86134.1"/>
    <property type="molecule type" value="Genomic_DNA"/>
</dbReference>
<dbReference type="RefSeq" id="WP_006751888.1">
    <property type="nucleotide sequence ID" value="NZ_CP009798.1"/>
</dbReference>
<dbReference type="SMR" id="Q0BI89"/>
<dbReference type="GeneID" id="98106478"/>
<dbReference type="KEGG" id="bam:Bamb_0575"/>
<dbReference type="PATRIC" id="fig|339670.21.peg.1022"/>
<dbReference type="eggNOG" id="COG0316">
    <property type="taxonomic scope" value="Bacteria"/>
</dbReference>
<dbReference type="Proteomes" id="UP000000662">
    <property type="component" value="Chromosome 1"/>
</dbReference>
<dbReference type="GO" id="GO:0051537">
    <property type="term" value="F:2 iron, 2 sulfur cluster binding"/>
    <property type="evidence" value="ECO:0007669"/>
    <property type="project" value="TreeGrafter"/>
</dbReference>
<dbReference type="GO" id="GO:0051539">
    <property type="term" value="F:4 iron, 4 sulfur cluster binding"/>
    <property type="evidence" value="ECO:0007669"/>
    <property type="project" value="TreeGrafter"/>
</dbReference>
<dbReference type="GO" id="GO:0005506">
    <property type="term" value="F:iron ion binding"/>
    <property type="evidence" value="ECO:0007669"/>
    <property type="project" value="UniProtKB-UniRule"/>
</dbReference>
<dbReference type="GO" id="GO:0016226">
    <property type="term" value="P:iron-sulfur cluster assembly"/>
    <property type="evidence" value="ECO:0007669"/>
    <property type="project" value="UniProtKB-UniRule"/>
</dbReference>
<dbReference type="FunFam" id="2.60.300.12:FF:000002">
    <property type="entry name" value="Iron-sulfur cluster insertion protein ErpA"/>
    <property type="match status" value="1"/>
</dbReference>
<dbReference type="Gene3D" id="2.60.300.12">
    <property type="entry name" value="HesB-like domain"/>
    <property type="match status" value="1"/>
</dbReference>
<dbReference type="HAMAP" id="MF_01380">
    <property type="entry name" value="Fe_S_insert_ErpA"/>
    <property type="match status" value="1"/>
</dbReference>
<dbReference type="InterPro" id="IPR000361">
    <property type="entry name" value="FeS_biogenesis"/>
</dbReference>
<dbReference type="InterPro" id="IPR016092">
    <property type="entry name" value="FeS_cluster_insertion"/>
</dbReference>
<dbReference type="InterPro" id="IPR017870">
    <property type="entry name" value="FeS_cluster_insertion_CS"/>
</dbReference>
<dbReference type="InterPro" id="IPR023063">
    <property type="entry name" value="FeS_cluster_insertion_RrpA"/>
</dbReference>
<dbReference type="InterPro" id="IPR035903">
    <property type="entry name" value="HesB-like_dom_sf"/>
</dbReference>
<dbReference type="NCBIfam" id="TIGR00049">
    <property type="entry name" value="iron-sulfur cluster assembly accessory protein"/>
    <property type="match status" value="1"/>
</dbReference>
<dbReference type="NCBIfam" id="NF010147">
    <property type="entry name" value="PRK13623.1"/>
    <property type="match status" value="1"/>
</dbReference>
<dbReference type="PANTHER" id="PTHR43011">
    <property type="entry name" value="IRON-SULFUR CLUSTER ASSEMBLY 2 HOMOLOG, MITOCHONDRIAL"/>
    <property type="match status" value="1"/>
</dbReference>
<dbReference type="PANTHER" id="PTHR43011:SF1">
    <property type="entry name" value="IRON-SULFUR CLUSTER ASSEMBLY 2 HOMOLOG, MITOCHONDRIAL"/>
    <property type="match status" value="1"/>
</dbReference>
<dbReference type="Pfam" id="PF01521">
    <property type="entry name" value="Fe-S_biosyn"/>
    <property type="match status" value="1"/>
</dbReference>
<dbReference type="SUPFAM" id="SSF89360">
    <property type="entry name" value="HesB-like domain"/>
    <property type="match status" value="1"/>
</dbReference>
<dbReference type="PROSITE" id="PS01152">
    <property type="entry name" value="HESB"/>
    <property type="match status" value="1"/>
</dbReference>
<protein>
    <recommendedName>
        <fullName evidence="1">Putative iron-sulfur cluster insertion protein ErpA</fullName>
    </recommendedName>
</protein>
<reference key="1">
    <citation type="submission" date="2006-08" db="EMBL/GenBank/DDBJ databases">
        <title>Complete sequence of chromosome 1 of Burkholderia cepacia AMMD.</title>
        <authorList>
            <person name="Copeland A."/>
            <person name="Lucas S."/>
            <person name="Lapidus A."/>
            <person name="Barry K."/>
            <person name="Detter J.C."/>
            <person name="Glavina del Rio T."/>
            <person name="Hammon N."/>
            <person name="Israni S."/>
            <person name="Pitluck S."/>
            <person name="Bruce D."/>
            <person name="Chain P."/>
            <person name="Malfatti S."/>
            <person name="Shin M."/>
            <person name="Vergez L."/>
            <person name="Schmutz J."/>
            <person name="Larimer F."/>
            <person name="Land M."/>
            <person name="Hauser L."/>
            <person name="Kyrpides N."/>
            <person name="Kim E."/>
            <person name="Parke J."/>
            <person name="Coenye T."/>
            <person name="Konstantinidis K."/>
            <person name="Ramette A."/>
            <person name="Tiedje J."/>
            <person name="Richardson P."/>
        </authorList>
    </citation>
    <scope>NUCLEOTIDE SEQUENCE [LARGE SCALE GENOMIC DNA]</scope>
    <source>
        <strain>ATCC BAA-244 / DSM 16087 / CCUG 44356 / LMG 19182 / AMMD</strain>
    </source>
</reference>
<organism>
    <name type="scientific">Burkholderia ambifaria (strain ATCC BAA-244 / DSM 16087 / CCUG 44356 / LMG 19182 / AMMD)</name>
    <name type="common">Burkholderia cepacia (strain AMMD)</name>
    <dbReference type="NCBI Taxonomy" id="339670"/>
    <lineage>
        <taxon>Bacteria</taxon>
        <taxon>Pseudomonadati</taxon>
        <taxon>Pseudomonadota</taxon>
        <taxon>Betaproteobacteria</taxon>
        <taxon>Burkholderiales</taxon>
        <taxon>Burkholderiaceae</taxon>
        <taxon>Burkholderia</taxon>
        <taxon>Burkholderia cepacia complex</taxon>
    </lineage>
</organism>
<comment type="function">
    <text evidence="1">Required for insertion of 4Fe-4S clusters.</text>
</comment>
<comment type="cofactor">
    <cofactor evidence="1">
        <name>iron-sulfur cluster</name>
        <dbReference type="ChEBI" id="CHEBI:30408"/>
    </cofactor>
    <text evidence="1">Binds 1 iron-sulfur cluster per subunit.</text>
</comment>
<comment type="subunit">
    <text evidence="1">Homodimer.</text>
</comment>
<comment type="similarity">
    <text evidence="1">Belongs to the HesB/IscA family.</text>
</comment>
<evidence type="ECO:0000255" key="1">
    <source>
        <dbReference type="HAMAP-Rule" id="MF_01380"/>
    </source>
</evidence>
<name>ERPA_BURCM</name>
<proteinExistence type="inferred from homology"/>
<sequence length="123" mass="13269">MNAVTESAATTAEMPVPFVFTDAAADKVKQLIDEEGNPDLKLRVFVQGGGCSGFQYGFTFDEEVNEDDTVMNKNGVQLLIDSMSYQYLVGAEIDYKDDLNGAQFVIKNPNATTTCGCGSSFSV</sequence>
<accession>Q0BI89</accession>